<dbReference type="EC" id="2.3.1.-"/>
<dbReference type="EMBL" id="EU022705">
    <property type="protein sequence ID" value="ABV71393.1"/>
    <property type="molecule type" value="Genomic_DNA"/>
</dbReference>
<dbReference type="EMBL" id="CP002921">
    <property type="protein sequence ID" value="AEM55786.1"/>
    <property type="molecule type" value="Genomic_DNA"/>
</dbReference>
<dbReference type="RefSeq" id="WP_014039170.1">
    <property type="nucleotide sequence ID" value="NC_015948.1"/>
</dbReference>
<dbReference type="SMR" id="G0HQZ5"/>
<dbReference type="STRING" id="634497.HAH_0153"/>
<dbReference type="KEGG" id="hhi:HAH_0153"/>
<dbReference type="eggNOG" id="arCOG06343">
    <property type="taxonomic scope" value="Archaea"/>
</dbReference>
<dbReference type="HOGENOM" id="CLU_1485849_0_0_2"/>
<dbReference type="OrthoDB" id="200001at2157"/>
<dbReference type="UniPathway" id="UPA00917"/>
<dbReference type="Proteomes" id="UP000005629">
    <property type="component" value="Chromosome I"/>
</dbReference>
<dbReference type="GO" id="GO:0016746">
    <property type="term" value="F:acyltransferase activity"/>
    <property type="evidence" value="ECO:0007669"/>
    <property type="project" value="UniProtKB-KW"/>
</dbReference>
<dbReference type="GO" id="GO:0042621">
    <property type="term" value="P:poly(3-hydroxyalkanoate) biosynthetic process"/>
    <property type="evidence" value="ECO:0007669"/>
    <property type="project" value="UniProtKB-KW"/>
</dbReference>
<dbReference type="GO" id="GO:0042619">
    <property type="term" value="P:poly-hydroxybutyrate biosynthetic process"/>
    <property type="evidence" value="ECO:0007669"/>
    <property type="project" value="UniProtKB-KW"/>
</dbReference>
<dbReference type="InterPro" id="IPR010123">
    <property type="entry name" value="PHA_synth_III_E"/>
</dbReference>
<dbReference type="Pfam" id="PF09712">
    <property type="entry name" value="PHA_synth_III_E"/>
    <property type="match status" value="1"/>
</dbReference>
<sequence length="181" mass="20610">MSNTNNIQEEWTEMVEEMNNAVADSMEQNMKAQAAFVESWADAVEDTIPKEEDLADGMDGYNRAYEEWIDAAEQMVERSTDAAQGEDVDPAEFRDIWLQSANEAFKHVMGTSAFAAANGQLVESMMEMQQEADDLSQDALEQMGFPTRNDVDEVAERLIELERRQHAVEQKLDRVLEHLEE</sequence>
<organism>
    <name type="scientific">Haloarcula hispanica (strain ATCC 33960 / DSM 4426 / JCM 8911 / NBRC 102182 / NCIMB 2187 / VKM B-1755)</name>
    <dbReference type="NCBI Taxonomy" id="634497"/>
    <lineage>
        <taxon>Archaea</taxon>
        <taxon>Methanobacteriati</taxon>
        <taxon>Methanobacteriota</taxon>
        <taxon>Stenosarchaea group</taxon>
        <taxon>Halobacteria</taxon>
        <taxon>Halobacteriales</taxon>
        <taxon>Haloarculaceae</taxon>
        <taxon>Haloarcula</taxon>
    </lineage>
</organism>
<accession>G0HQZ5</accession>
<accession>A8C9M3</accession>
<gene>
    <name type="primary">phaE</name>
    <name type="ordered locus">HAH_0153</name>
</gene>
<comment type="function">
    <text evidence="2">Involved in the production of polyhydroxyalkonic acids (PHAs), which are water-insoluble biopolymers used as intracellular energy reserve material when cells grow under conditions of nutrient limitation. PHAs are composed primarily of 3-hydroxybutyric acid (3HB) and 3-hydroxyvaleric acid (3HV). Required for the production of poly-beta-hydroxybutyrate (PHB) and poly(beta-hydroxybutyrate-co-beta-hydroxyvalerate) (PHBV).</text>
</comment>
<comment type="pathway">
    <text>Biopolymer metabolism; poly-(R)-3-hydroxybutanoate biosynthesis.</text>
</comment>
<comment type="subunit">
    <text evidence="1">Heterodimer with PhaC.</text>
</comment>
<comment type="disruption phenotype">
    <text evidence="2">Depletion of both phaC and phaE genes leads to complete loss of the PHA synthase activity.</text>
</comment>
<comment type="biotechnology">
    <text>PHB and PHBV are desirable bioplastic due to their biodegradability, biocompatibility, and mechanical properties. However, PHBV has better mechanical properties than PHB.</text>
</comment>
<comment type="similarity">
    <text evidence="3">Belongs to the PHA/PHB synthase family.</text>
</comment>
<protein>
    <recommendedName>
        <fullName>Poly(3-hydroxyalkanoate) polymerase subunit PhaE</fullName>
        <shortName>PHA polymerase</shortName>
        <ecNumber>2.3.1.-</ecNumber>
    </recommendedName>
    <alternativeName>
        <fullName>PHB synthase subunit PhaE</fullName>
    </alternativeName>
    <alternativeName>
        <fullName>Poly(3-hydroxybutyrate) polymerase subunit PhaE</fullName>
        <shortName>PHB polymerase</shortName>
    </alternativeName>
    <alternativeName>
        <fullName>Polyhydroxyalkanoic acid synthase subunit PhaE</fullName>
        <shortName>PHA synthase</shortName>
    </alternativeName>
</protein>
<name>PHAE_HALHT</name>
<feature type="chain" id="PRO_0000428872" description="Poly(3-hydroxyalkanoate) polymerase subunit PhaE">
    <location>
        <begin position="1"/>
        <end position="181"/>
    </location>
</feature>
<proteinExistence type="evidence at protein level"/>
<keyword id="KW-0012">Acyltransferase</keyword>
<keyword id="KW-0577">PHA biosynthesis</keyword>
<keyword id="KW-0583">PHB biosynthesis</keyword>
<keyword id="KW-0808">Transferase</keyword>
<reference key="1">
    <citation type="journal article" date="2007" name="Appl. Environ. Microbiol.">
        <title>Molecular characterization of the phaECHm genes, required for biosynthesis of poly(3-hydroxybutyrate) in the extremely halophilic archaeon Haloarcula marismortui.</title>
        <authorList>
            <person name="Han J."/>
            <person name="Lu Q."/>
            <person name="Zhou L."/>
            <person name="Zhou J."/>
            <person name="Xiang H."/>
        </authorList>
    </citation>
    <scope>NUCLEOTIDE SEQUENCE [GENOMIC DNA]</scope>
    <scope>FUNCTION</scope>
    <scope>DISRUPTION PHENOTYPE</scope>
    <source>
        <strain>ATCC 33960 / DSM 4426 / JCM 8911 / NBRC 102182 / NCIMB 2187 / VKM B-1755</strain>
    </source>
</reference>
<reference key="2">
    <citation type="journal article" date="2011" name="J. Bacteriol.">
        <title>Complete genome sequence of Haloarcula hispanica, a model haloarchaeon for studying genetics, metabolism, and virus-host interaction.</title>
        <authorList>
            <person name="Liu H."/>
            <person name="Wu Z."/>
            <person name="Li M."/>
            <person name="Zhang F."/>
            <person name="Zheng H."/>
            <person name="Han J."/>
            <person name="Liu J."/>
            <person name="Zhou J."/>
            <person name="Wang S."/>
            <person name="Xiang H."/>
        </authorList>
    </citation>
    <scope>NUCLEOTIDE SEQUENCE [LARGE SCALE GENOMIC DNA]</scope>
    <source>
        <strain>ATCC 33960 / DSM 4426 / JCM 8911 / NBRC 102182 / NCIMB 2187 / VKM B-1755</strain>
    </source>
</reference>
<evidence type="ECO:0000250" key="1"/>
<evidence type="ECO:0000269" key="2">
    <source>
    </source>
</evidence>
<evidence type="ECO:0000305" key="3"/>